<evidence type="ECO:0000255" key="1">
    <source>
        <dbReference type="HAMAP-Rule" id="MF_00165"/>
    </source>
</evidence>
<organism>
    <name type="scientific">Rhizobium meliloti (strain 1021)</name>
    <name type="common">Ensifer meliloti</name>
    <name type="synonym">Sinorhizobium meliloti</name>
    <dbReference type="NCBI Taxonomy" id="266834"/>
    <lineage>
        <taxon>Bacteria</taxon>
        <taxon>Pseudomonadati</taxon>
        <taxon>Pseudomonadota</taxon>
        <taxon>Alphaproteobacteria</taxon>
        <taxon>Hyphomicrobiales</taxon>
        <taxon>Rhizobiaceae</taxon>
        <taxon>Sinorhizobium/Ensifer group</taxon>
        <taxon>Sinorhizobium</taxon>
    </lineage>
</organism>
<name>KTHY_RHIME</name>
<proteinExistence type="inferred from homology"/>
<gene>
    <name evidence="1" type="primary">tmk</name>
    <name type="ordered locus">R01604</name>
    <name type="ORF">SMc01189</name>
</gene>
<keyword id="KW-0067">ATP-binding</keyword>
<keyword id="KW-0418">Kinase</keyword>
<keyword id="KW-0545">Nucleotide biosynthesis</keyword>
<keyword id="KW-0547">Nucleotide-binding</keyword>
<keyword id="KW-1185">Reference proteome</keyword>
<keyword id="KW-0808">Transferase</keyword>
<reference key="1">
    <citation type="journal article" date="2001" name="Proc. Natl. Acad. Sci. U.S.A.">
        <title>Analysis of the chromosome sequence of the legume symbiont Sinorhizobium meliloti strain 1021.</title>
        <authorList>
            <person name="Capela D."/>
            <person name="Barloy-Hubler F."/>
            <person name="Gouzy J."/>
            <person name="Bothe G."/>
            <person name="Ampe F."/>
            <person name="Batut J."/>
            <person name="Boistard P."/>
            <person name="Becker A."/>
            <person name="Boutry M."/>
            <person name="Cadieu E."/>
            <person name="Dreano S."/>
            <person name="Gloux S."/>
            <person name="Godrie T."/>
            <person name="Goffeau A."/>
            <person name="Kahn D."/>
            <person name="Kiss E."/>
            <person name="Lelaure V."/>
            <person name="Masuy D."/>
            <person name="Pohl T."/>
            <person name="Portetelle D."/>
            <person name="Puehler A."/>
            <person name="Purnelle B."/>
            <person name="Ramsperger U."/>
            <person name="Renard C."/>
            <person name="Thebault P."/>
            <person name="Vandenbol M."/>
            <person name="Weidner S."/>
            <person name="Galibert F."/>
        </authorList>
    </citation>
    <scope>NUCLEOTIDE SEQUENCE [LARGE SCALE GENOMIC DNA]</scope>
    <source>
        <strain>1021</strain>
    </source>
</reference>
<reference key="2">
    <citation type="journal article" date="2001" name="Science">
        <title>The composite genome of the legume symbiont Sinorhizobium meliloti.</title>
        <authorList>
            <person name="Galibert F."/>
            <person name="Finan T.M."/>
            <person name="Long S.R."/>
            <person name="Puehler A."/>
            <person name="Abola P."/>
            <person name="Ampe F."/>
            <person name="Barloy-Hubler F."/>
            <person name="Barnett M.J."/>
            <person name="Becker A."/>
            <person name="Boistard P."/>
            <person name="Bothe G."/>
            <person name="Boutry M."/>
            <person name="Bowser L."/>
            <person name="Buhrmester J."/>
            <person name="Cadieu E."/>
            <person name="Capela D."/>
            <person name="Chain P."/>
            <person name="Cowie A."/>
            <person name="Davis R.W."/>
            <person name="Dreano S."/>
            <person name="Federspiel N.A."/>
            <person name="Fisher R.F."/>
            <person name="Gloux S."/>
            <person name="Godrie T."/>
            <person name="Goffeau A."/>
            <person name="Golding B."/>
            <person name="Gouzy J."/>
            <person name="Gurjal M."/>
            <person name="Hernandez-Lucas I."/>
            <person name="Hong A."/>
            <person name="Huizar L."/>
            <person name="Hyman R.W."/>
            <person name="Jones T."/>
            <person name="Kahn D."/>
            <person name="Kahn M.L."/>
            <person name="Kalman S."/>
            <person name="Keating D.H."/>
            <person name="Kiss E."/>
            <person name="Komp C."/>
            <person name="Lelaure V."/>
            <person name="Masuy D."/>
            <person name="Palm C."/>
            <person name="Peck M.C."/>
            <person name="Pohl T.M."/>
            <person name="Portetelle D."/>
            <person name="Purnelle B."/>
            <person name="Ramsperger U."/>
            <person name="Surzycki R."/>
            <person name="Thebault P."/>
            <person name="Vandenbol M."/>
            <person name="Vorhoelter F.J."/>
            <person name="Weidner S."/>
            <person name="Wells D.H."/>
            <person name="Wong K."/>
            <person name="Yeh K.-C."/>
            <person name="Batut J."/>
        </authorList>
    </citation>
    <scope>NUCLEOTIDE SEQUENCE [LARGE SCALE GENOMIC DNA]</scope>
    <source>
        <strain>1021</strain>
    </source>
</reference>
<feature type="chain" id="PRO_0000155328" description="Thymidylate kinase">
    <location>
        <begin position="1"/>
        <end position="234"/>
    </location>
</feature>
<feature type="binding site" evidence="1">
    <location>
        <begin position="21"/>
        <end position="28"/>
    </location>
    <ligand>
        <name>ATP</name>
        <dbReference type="ChEBI" id="CHEBI:30616"/>
    </ligand>
</feature>
<protein>
    <recommendedName>
        <fullName evidence="1">Thymidylate kinase</fullName>
        <ecNumber evidence="1">2.7.4.9</ecNumber>
    </recommendedName>
    <alternativeName>
        <fullName evidence="1">dTMP kinase</fullName>
    </alternativeName>
</protein>
<comment type="function">
    <text evidence="1">Phosphorylation of dTMP to form dTDP in both de novo and salvage pathways of dTTP synthesis.</text>
</comment>
<comment type="catalytic activity">
    <reaction evidence="1">
        <text>dTMP + ATP = dTDP + ADP</text>
        <dbReference type="Rhea" id="RHEA:13517"/>
        <dbReference type="ChEBI" id="CHEBI:30616"/>
        <dbReference type="ChEBI" id="CHEBI:58369"/>
        <dbReference type="ChEBI" id="CHEBI:63528"/>
        <dbReference type="ChEBI" id="CHEBI:456216"/>
        <dbReference type="EC" id="2.7.4.9"/>
    </reaction>
</comment>
<comment type="similarity">
    <text evidence="1">Belongs to the thymidylate kinase family.</text>
</comment>
<dbReference type="EC" id="2.7.4.9" evidence="1"/>
<dbReference type="EMBL" id="AL591688">
    <property type="protein sequence ID" value="CAC46183.1"/>
    <property type="molecule type" value="Genomic_DNA"/>
</dbReference>
<dbReference type="RefSeq" id="NP_385710.1">
    <property type="nucleotide sequence ID" value="NC_003047.1"/>
</dbReference>
<dbReference type="RefSeq" id="WP_010969339.1">
    <property type="nucleotide sequence ID" value="NC_003047.1"/>
</dbReference>
<dbReference type="SMR" id="Q92PW7"/>
<dbReference type="EnsemblBacteria" id="CAC46183">
    <property type="protein sequence ID" value="CAC46183"/>
    <property type="gene ID" value="SMc01189"/>
</dbReference>
<dbReference type="KEGG" id="sme:SMc01189"/>
<dbReference type="PATRIC" id="fig|266834.11.peg.3033"/>
<dbReference type="eggNOG" id="COG0125">
    <property type="taxonomic scope" value="Bacteria"/>
</dbReference>
<dbReference type="HOGENOM" id="CLU_049131_0_0_5"/>
<dbReference type="OrthoDB" id="9774907at2"/>
<dbReference type="Proteomes" id="UP000001976">
    <property type="component" value="Chromosome"/>
</dbReference>
<dbReference type="GO" id="GO:0005829">
    <property type="term" value="C:cytosol"/>
    <property type="evidence" value="ECO:0007669"/>
    <property type="project" value="TreeGrafter"/>
</dbReference>
<dbReference type="GO" id="GO:0005524">
    <property type="term" value="F:ATP binding"/>
    <property type="evidence" value="ECO:0007669"/>
    <property type="project" value="UniProtKB-UniRule"/>
</dbReference>
<dbReference type="GO" id="GO:0004798">
    <property type="term" value="F:dTMP kinase activity"/>
    <property type="evidence" value="ECO:0007669"/>
    <property type="project" value="UniProtKB-UniRule"/>
</dbReference>
<dbReference type="GO" id="GO:0006233">
    <property type="term" value="P:dTDP biosynthetic process"/>
    <property type="evidence" value="ECO:0007669"/>
    <property type="project" value="InterPro"/>
</dbReference>
<dbReference type="GO" id="GO:0006235">
    <property type="term" value="P:dTTP biosynthetic process"/>
    <property type="evidence" value="ECO:0007669"/>
    <property type="project" value="UniProtKB-UniRule"/>
</dbReference>
<dbReference type="GO" id="GO:0006227">
    <property type="term" value="P:dUDP biosynthetic process"/>
    <property type="evidence" value="ECO:0007669"/>
    <property type="project" value="TreeGrafter"/>
</dbReference>
<dbReference type="CDD" id="cd01672">
    <property type="entry name" value="TMPK"/>
    <property type="match status" value="1"/>
</dbReference>
<dbReference type="FunFam" id="3.40.50.300:FF:000225">
    <property type="entry name" value="Thymidylate kinase"/>
    <property type="match status" value="1"/>
</dbReference>
<dbReference type="Gene3D" id="3.40.50.300">
    <property type="entry name" value="P-loop containing nucleotide triphosphate hydrolases"/>
    <property type="match status" value="1"/>
</dbReference>
<dbReference type="HAMAP" id="MF_00165">
    <property type="entry name" value="Thymidylate_kinase"/>
    <property type="match status" value="1"/>
</dbReference>
<dbReference type="InterPro" id="IPR027417">
    <property type="entry name" value="P-loop_NTPase"/>
</dbReference>
<dbReference type="InterPro" id="IPR039430">
    <property type="entry name" value="Thymidylate_kin-like_dom"/>
</dbReference>
<dbReference type="InterPro" id="IPR018095">
    <property type="entry name" value="Thymidylate_kin_CS"/>
</dbReference>
<dbReference type="InterPro" id="IPR018094">
    <property type="entry name" value="Thymidylate_kinase"/>
</dbReference>
<dbReference type="NCBIfam" id="TIGR00041">
    <property type="entry name" value="DTMP_kinase"/>
    <property type="match status" value="1"/>
</dbReference>
<dbReference type="PANTHER" id="PTHR10344">
    <property type="entry name" value="THYMIDYLATE KINASE"/>
    <property type="match status" value="1"/>
</dbReference>
<dbReference type="PANTHER" id="PTHR10344:SF4">
    <property type="entry name" value="UMP-CMP KINASE 2, MITOCHONDRIAL"/>
    <property type="match status" value="1"/>
</dbReference>
<dbReference type="Pfam" id="PF02223">
    <property type="entry name" value="Thymidylate_kin"/>
    <property type="match status" value="1"/>
</dbReference>
<dbReference type="SUPFAM" id="SSF52540">
    <property type="entry name" value="P-loop containing nucleoside triphosphate hydrolases"/>
    <property type="match status" value="1"/>
</dbReference>
<dbReference type="PROSITE" id="PS01331">
    <property type="entry name" value="THYMIDYLATE_KINASE"/>
    <property type="match status" value="1"/>
</dbReference>
<accession>Q92PW7</accession>
<sequence length="234" mass="25241">MHADPGIEVSLAKGFFITFEGGEGTGKSTQMRLLAEALSARGYRVLTTREPGGSVGAEAVRHVLLSGAAESFGVRMEAILFAAARSDHVEEVIRPALEQGTIVLCDRFMDSSRVYQGVTGNLEPAFVETLERVAVNGVIPDCTIIFDLPASVGLERARRRAANDSPDRFEKEQLETHEKRREAFLDIAAADPERCRVVDANRPPTAIAAEVLSLVEALLPLEGKPQPSNAEATS</sequence>